<accession>Q43189</accession>
<protein>
    <recommendedName>
        <fullName>Probable linoleate 9S-lipoxygenase 3</fullName>
        <ecNumber>1.13.11.58</ecNumber>
    </recommendedName>
</protein>
<organism>
    <name type="scientific">Solanum tuberosum</name>
    <name type="common">Potato</name>
    <dbReference type="NCBI Taxonomy" id="4113"/>
    <lineage>
        <taxon>Eukaryota</taxon>
        <taxon>Viridiplantae</taxon>
        <taxon>Streptophyta</taxon>
        <taxon>Embryophyta</taxon>
        <taxon>Tracheophyta</taxon>
        <taxon>Spermatophyta</taxon>
        <taxon>Magnoliopsida</taxon>
        <taxon>eudicotyledons</taxon>
        <taxon>Gunneridae</taxon>
        <taxon>Pentapetalae</taxon>
        <taxon>asterids</taxon>
        <taxon>lamiids</taxon>
        <taxon>Solanales</taxon>
        <taxon>Solanaceae</taxon>
        <taxon>Solanoideae</taxon>
        <taxon>Solaneae</taxon>
        <taxon>Solanum</taxon>
    </lineage>
</organism>
<reference key="1">
    <citation type="online journal article" date="1996" name="Plant Gene Register">
        <title>Potato lipoxygenase genes expressed during the early stages of tuberization.</title>
        <authorList>
            <person name="Kolomiets M.V."/>
            <person name="Hannapel D.J."/>
            <person name="Gladon R.J."/>
        </authorList>
        <locator>PGR96-065</locator>
    </citation>
    <scope>NUCLEOTIDE SEQUENCE [MRNA]</scope>
    <scope>TISSUE SPECIFICITY</scope>
    <source>
        <strain>cv. Superior</strain>
    </source>
</reference>
<reference key="2">
    <citation type="journal article" date="2000" name="Plant Physiol.">
        <title>A leaf lipoxygenase of potato induced specifically by pathogen infection.</title>
        <authorList>
            <person name="Kolomiets M.V."/>
            <person name="Chen H."/>
            <person name="Gladon R.J."/>
            <person name="Braun E.J."/>
            <person name="Hannapel D.J."/>
        </authorList>
    </citation>
    <scope>TISSUE SPECIFICITY</scope>
</reference>
<comment type="function">
    <text evidence="3">Plant lipoxygenases may be involved in a number of diverse aspects of plant physiology including growth and development, pest resistance, and senescence or responses to wounding. Catalyzes the hydroperoxidation of lipids containing a cis,cis-1,4-pentadiene structure.</text>
</comment>
<comment type="catalytic activity">
    <reaction>
        <text>(9Z,12Z)-octadecadienoate + O2 = (9S)-hydroperoxy-(10E,12Z)-octadecadienoate</text>
        <dbReference type="Rhea" id="RHEA:30291"/>
        <dbReference type="ChEBI" id="CHEBI:15379"/>
        <dbReference type="ChEBI" id="CHEBI:30245"/>
        <dbReference type="ChEBI" id="CHEBI:60955"/>
        <dbReference type="EC" id="1.13.11.58"/>
    </reaction>
</comment>
<comment type="cofactor">
    <cofactor evidence="3">
        <name>Fe cation</name>
        <dbReference type="ChEBI" id="CHEBI:24875"/>
    </cofactor>
    <text evidence="3">Binds 1 Fe cation per subunit. Iron is tightly bound.</text>
</comment>
<comment type="pathway">
    <text evidence="3">Lipid metabolism; oxylipin biosynthesis.</text>
</comment>
<comment type="subunit">
    <text evidence="1">Monomer.</text>
</comment>
<comment type="subcellular location">
    <subcellularLocation>
        <location evidence="3">Cytoplasm</location>
    </subcellularLocation>
</comment>
<comment type="tissue specificity">
    <text evidence="5 6">Expressed in tubers and roots. Not detected in leaves, flowers, stems, shoot tips, or axillary buds.</text>
</comment>
<comment type="similarity">
    <text evidence="7">Belongs to the lipoxygenase family.</text>
</comment>
<name>LOX13_SOLTU</name>
<dbReference type="EC" id="1.13.11.58"/>
<dbReference type="EMBL" id="U60200">
    <property type="protein sequence ID" value="AAB67858.1"/>
    <property type="molecule type" value="mRNA"/>
</dbReference>
<dbReference type="SMR" id="Q43189"/>
<dbReference type="FunCoup" id="Q43189">
    <property type="interactions" value="87"/>
</dbReference>
<dbReference type="STRING" id="4113.Q43189"/>
<dbReference type="InParanoid" id="Q43189"/>
<dbReference type="BRENDA" id="1.13.11.58">
    <property type="organism ID" value="5757"/>
</dbReference>
<dbReference type="UniPathway" id="UPA00382"/>
<dbReference type="Proteomes" id="UP000011115">
    <property type="component" value="Unassembled WGS sequence"/>
</dbReference>
<dbReference type="ExpressionAtlas" id="Q43189">
    <property type="expression patterns" value="baseline and differential"/>
</dbReference>
<dbReference type="GO" id="GO:0005737">
    <property type="term" value="C:cytoplasm"/>
    <property type="evidence" value="ECO:0007669"/>
    <property type="project" value="UniProtKB-SubCell"/>
</dbReference>
<dbReference type="GO" id="GO:1990136">
    <property type="term" value="F:linoleate 9S-lipoxygenase activity"/>
    <property type="evidence" value="ECO:0007669"/>
    <property type="project" value="UniProtKB-EC"/>
</dbReference>
<dbReference type="GO" id="GO:0046872">
    <property type="term" value="F:metal ion binding"/>
    <property type="evidence" value="ECO:0007669"/>
    <property type="project" value="UniProtKB-KW"/>
</dbReference>
<dbReference type="GO" id="GO:0016702">
    <property type="term" value="F:oxidoreductase activity, acting on single donors with incorporation of molecular oxygen, incorporation of two atoms of oxygen"/>
    <property type="evidence" value="ECO:0000318"/>
    <property type="project" value="GO_Central"/>
</dbReference>
<dbReference type="GO" id="GO:0006633">
    <property type="term" value="P:fatty acid biosynthetic process"/>
    <property type="evidence" value="ECO:0007669"/>
    <property type="project" value="UniProtKB-KW"/>
</dbReference>
<dbReference type="GO" id="GO:0034440">
    <property type="term" value="P:lipid oxidation"/>
    <property type="evidence" value="ECO:0000318"/>
    <property type="project" value="GO_Central"/>
</dbReference>
<dbReference type="GO" id="GO:0031408">
    <property type="term" value="P:oxylipin biosynthetic process"/>
    <property type="evidence" value="ECO:0007669"/>
    <property type="project" value="UniProtKB-UniPathway"/>
</dbReference>
<dbReference type="CDD" id="cd01751">
    <property type="entry name" value="PLAT_LH2"/>
    <property type="match status" value="1"/>
</dbReference>
<dbReference type="FunFam" id="1.20.245.10:FF:000002">
    <property type="entry name" value="Lipoxygenase"/>
    <property type="match status" value="1"/>
</dbReference>
<dbReference type="FunFam" id="2.60.60.20:FF:000015">
    <property type="entry name" value="Lipoxygenase"/>
    <property type="match status" value="1"/>
</dbReference>
<dbReference type="FunFam" id="3.10.450.60:FF:000002">
    <property type="entry name" value="Lipoxygenase"/>
    <property type="match status" value="1"/>
</dbReference>
<dbReference type="FunFam" id="4.10.372.10:FF:000001">
    <property type="entry name" value="Lipoxygenase"/>
    <property type="match status" value="1"/>
</dbReference>
<dbReference type="FunFam" id="4.10.375.10:FF:000001">
    <property type="entry name" value="Lipoxygenase"/>
    <property type="match status" value="1"/>
</dbReference>
<dbReference type="Gene3D" id="3.10.450.60">
    <property type="match status" value="1"/>
</dbReference>
<dbReference type="Gene3D" id="4.10.375.10">
    <property type="entry name" value="Lipoxygenase-1, Domain 2"/>
    <property type="match status" value="1"/>
</dbReference>
<dbReference type="Gene3D" id="4.10.372.10">
    <property type="entry name" value="Lipoxygenase-1, Domain 3"/>
    <property type="match status" value="1"/>
</dbReference>
<dbReference type="Gene3D" id="1.20.245.10">
    <property type="entry name" value="Lipoxygenase-1, Domain 5"/>
    <property type="match status" value="1"/>
</dbReference>
<dbReference type="Gene3D" id="2.60.60.20">
    <property type="entry name" value="PLAT/LH2 domain"/>
    <property type="match status" value="1"/>
</dbReference>
<dbReference type="InterPro" id="IPR000907">
    <property type="entry name" value="LipOase"/>
</dbReference>
<dbReference type="InterPro" id="IPR013819">
    <property type="entry name" value="LipOase_C"/>
</dbReference>
<dbReference type="InterPro" id="IPR036226">
    <property type="entry name" value="LipOase_C_sf"/>
</dbReference>
<dbReference type="InterPro" id="IPR020834">
    <property type="entry name" value="LipOase_CS"/>
</dbReference>
<dbReference type="InterPro" id="IPR020833">
    <property type="entry name" value="LipOase_Fe_BS"/>
</dbReference>
<dbReference type="InterPro" id="IPR001246">
    <property type="entry name" value="LipOase_plant"/>
</dbReference>
<dbReference type="InterPro" id="IPR042057">
    <property type="entry name" value="Lipoxy_PLAT/LH2"/>
</dbReference>
<dbReference type="InterPro" id="IPR027433">
    <property type="entry name" value="Lipoxygenase_dom_3"/>
</dbReference>
<dbReference type="InterPro" id="IPR001024">
    <property type="entry name" value="PLAT/LH2_dom"/>
</dbReference>
<dbReference type="InterPro" id="IPR036392">
    <property type="entry name" value="PLAT/LH2_dom_sf"/>
</dbReference>
<dbReference type="PANTHER" id="PTHR11771">
    <property type="entry name" value="LIPOXYGENASE"/>
    <property type="match status" value="1"/>
</dbReference>
<dbReference type="Pfam" id="PF00305">
    <property type="entry name" value="Lipoxygenase"/>
    <property type="match status" value="1"/>
</dbReference>
<dbReference type="Pfam" id="PF01477">
    <property type="entry name" value="PLAT"/>
    <property type="match status" value="1"/>
</dbReference>
<dbReference type="PRINTS" id="PR00087">
    <property type="entry name" value="LIPOXYGENASE"/>
</dbReference>
<dbReference type="PRINTS" id="PR00468">
    <property type="entry name" value="PLTLPOXGNASE"/>
</dbReference>
<dbReference type="SMART" id="SM00308">
    <property type="entry name" value="LH2"/>
    <property type="match status" value="1"/>
</dbReference>
<dbReference type="SUPFAM" id="SSF49723">
    <property type="entry name" value="Lipase/lipooxygenase domain (PLAT/LH2 domain)"/>
    <property type="match status" value="1"/>
</dbReference>
<dbReference type="SUPFAM" id="SSF48484">
    <property type="entry name" value="Lipoxigenase"/>
    <property type="match status" value="1"/>
</dbReference>
<dbReference type="PROSITE" id="PS00711">
    <property type="entry name" value="LIPOXYGENASE_1"/>
    <property type="match status" value="1"/>
</dbReference>
<dbReference type="PROSITE" id="PS00081">
    <property type="entry name" value="LIPOXYGENASE_2"/>
    <property type="match status" value="1"/>
</dbReference>
<dbReference type="PROSITE" id="PS51393">
    <property type="entry name" value="LIPOXYGENASE_3"/>
    <property type="match status" value="1"/>
</dbReference>
<dbReference type="PROSITE" id="PS50095">
    <property type="entry name" value="PLAT"/>
    <property type="match status" value="1"/>
</dbReference>
<sequence length="861" mass="96974">MIGQITSGLFGGHDDSKKVKGTVVMMNKNVLDFTDLASSLTGKIFDVLGQKVSFQLISSVQGDPTNGLQGKHSNPAYLENSLFTLTPLTAGSETAFGVTFDWNEEFGVPGAFIIKNMHITEFFLKSLTLEDVPNHGKVHFVCNSWVYPSLNYKSDRIFFANQPYLPSDTPELLRKYRENELLTLRGDGTGKREAWDRIYDYDIYNDLGNPDQGKENVRTTLGGSAEYPYPRRGRTGRPPTRTDPKSESRIPLILSTDIYVPRDERFGHLKMSDFLTYALKSIVQFILPELHALFDGTPNEFDSFEDVLRLYEGGIKLPQGPLFKALTAAIPLEMIRELLRTDGEGILRFPTPLVIKDSKTAWRTDEEFAREMLAGTNPVIISRLQEFPPKSKLDPEAYGNQNSTITAEHIEDKLDGLTVDEAMNNNKLFILNHHDLLIPYLRRINTTITKTYASRTLLFLQDNGSLKPLAIELSLPHPDGDQFGVTSKVYTPSDQGVESSIWQLAKAYVAVNDSGVHQLISHWLNTHAVIEPFVIATNRQLSVLHPIHKLLYPHFRDTMNINALARQILINAAGVFESTVFQSKFALEMSAVVYKDWVFPDQALPADLVKRGVAVEDSSSPHGVRLLIEDYPYAVDGLEIWSAIKSWVTDYCSFYYGSDEEILKDNELQAWWKELREVGHGDKKNEPWWPEMETPQELIDSCTTIIWIASALHAAVNFGQYPYAGYLPNRATVSRRFMPEPGTPEYEELKKNPDKAFLKTITAQLQTLLGVSLVEILSRHTTDEIYLGQRESPEWTKDKEPLAAFDRFGKKLTDIEKQIIQRNGDNILTNRSGPVNAPYTLLFPTSEGGLTGKGIPNSVSI</sequence>
<keyword id="KW-0963">Cytoplasm</keyword>
<keyword id="KW-0223">Dioxygenase</keyword>
<keyword id="KW-0275">Fatty acid biosynthesis</keyword>
<keyword id="KW-0276">Fatty acid metabolism</keyword>
<keyword id="KW-0408">Iron</keyword>
<keyword id="KW-0444">Lipid biosynthesis</keyword>
<keyword id="KW-0443">Lipid metabolism</keyword>
<keyword id="KW-0479">Metal-binding</keyword>
<keyword id="KW-0560">Oxidoreductase</keyword>
<keyword id="KW-0925">Oxylipin biosynthesis</keyword>
<keyword id="KW-1185">Reference proteome</keyword>
<proteinExistence type="evidence at transcript level"/>
<feature type="chain" id="PRO_0000412921" description="Probable linoleate 9S-lipoxygenase 3">
    <location>
        <begin position="1"/>
        <end position="861"/>
    </location>
</feature>
<feature type="domain" description="PLAT" evidence="2">
    <location>
        <begin position="33"/>
        <end position="160"/>
    </location>
</feature>
<feature type="domain" description="Lipoxygenase" evidence="3">
    <location>
        <begin position="163"/>
        <end position="861"/>
    </location>
</feature>
<feature type="region of interest" description="Disordered" evidence="4">
    <location>
        <begin position="220"/>
        <end position="247"/>
    </location>
</feature>
<feature type="binding site" evidence="3">
    <location>
        <position position="522"/>
    </location>
    <ligand>
        <name>Fe cation</name>
        <dbReference type="ChEBI" id="CHEBI:24875"/>
        <note>catalytic</note>
    </ligand>
</feature>
<feature type="binding site" evidence="3">
    <location>
        <position position="527"/>
    </location>
    <ligand>
        <name>Fe cation</name>
        <dbReference type="ChEBI" id="CHEBI:24875"/>
        <note>catalytic</note>
    </ligand>
</feature>
<feature type="binding site" evidence="3">
    <location>
        <position position="713"/>
    </location>
    <ligand>
        <name>Fe cation</name>
        <dbReference type="ChEBI" id="CHEBI:24875"/>
        <note>catalytic</note>
    </ligand>
</feature>
<feature type="binding site" evidence="3">
    <location>
        <position position="717"/>
    </location>
    <ligand>
        <name>Fe cation</name>
        <dbReference type="ChEBI" id="CHEBI:24875"/>
        <note>catalytic</note>
    </ligand>
</feature>
<feature type="binding site" evidence="3">
    <location>
        <position position="861"/>
    </location>
    <ligand>
        <name>Fe cation</name>
        <dbReference type="ChEBI" id="CHEBI:24875"/>
        <note>catalytic</note>
    </ligand>
</feature>
<evidence type="ECO:0000250" key="1"/>
<evidence type="ECO:0000255" key="2">
    <source>
        <dbReference type="PROSITE-ProRule" id="PRU00152"/>
    </source>
</evidence>
<evidence type="ECO:0000255" key="3">
    <source>
        <dbReference type="PROSITE-ProRule" id="PRU00726"/>
    </source>
</evidence>
<evidence type="ECO:0000256" key="4">
    <source>
        <dbReference type="SAM" id="MobiDB-lite"/>
    </source>
</evidence>
<evidence type="ECO:0000269" key="5">
    <source>
    </source>
</evidence>
<evidence type="ECO:0000269" key="6">
    <source ref="1"/>
</evidence>
<evidence type="ECO:0000305" key="7"/>
<gene>
    <name type="primary">LOX1.3</name>
    <name type="synonym">POTLX-1</name>
</gene>